<sequence>MSEEIKNEEIVEEVEATEEVVETPEKSELDLANERAEEFENKYLRAHAEMQNIQRRANEERQTIQRYRSQDLAKKILPSLDNLERALQVEGLTEDVKKGLEMVQESLIQALKEEGVEEVATDVFDPNLHMAIQTVPATDDCPAEHIAQVFQKGYKLHERLLRPAMVVVSE</sequence>
<gene>
    <name evidence="1" type="primary">grpE</name>
    <name type="ordered locus">SSU05_0299</name>
</gene>
<feature type="chain" id="PRO_1000053653" description="Protein GrpE">
    <location>
        <begin position="1"/>
        <end position="170"/>
    </location>
</feature>
<feature type="region of interest" description="Disordered" evidence="2">
    <location>
        <begin position="1"/>
        <end position="29"/>
    </location>
</feature>
<feature type="compositionally biased region" description="Acidic residues" evidence="2">
    <location>
        <begin position="10"/>
        <end position="22"/>
    </location>
</feature>
<name>GRPE_STRSY</name>
<protein>
    <recommendedName>
        <fullName evidence="1">Protein GrpE</fullName>
    </recommendedName>
    <alternativeName>
        <fullName evidence="1">HSP-70 cofactor</fullName>
    </alternativeName>
</protein>
<proteinExistence type="inferred from homology"/>
<reference key="1">
    <citation type="journal article" date="2007" name="PLoS ONE">
        <title>A glimpse of streptococcal toxic shock syndrome from comparative genomics of S. suis 2 Chinese isolates.</title>
        <authorList>
            <person name="Chen C."/>
            <person name="Tang J."/>
            <person name="Dong W."/>
            <person name="Wang C."/>
            <person name="Feng Y."/>
            <person name="Wang J."/>
            <person name="Zheng F."/>
            <person name="Pan X."/>
            <person name="Liu D."/>
            <person name="Li M."/>
            <person name="Song Y."/>
            <person name="Zhu X."/>
            <person name="Sun H."/>
            <person name="Feng T."/>
            <person name="Guo Z."/>
            <person name="Ju A."/>
            <person name="Ge J."/>
            <person name="Dong Y."/>
            <person name="Sun W."/>
            <person name="Jiang Y."/>
            <person name="Wang J."/>
            <person name="Yan J."/>
            <person name="Yang H."/>
            <person name="Wang X."/>
            <person name="Gao G.F."/>
            <person name="Yang R."/>
            <person name="Wang J."/>
            <person name="Yu J."/>
        </authorList>
    </citation>
    <scope>NUCLEOTIDE SEQUENCE [LARGE SCALE GENOMIC DNA]</scope>
    <source>
        <strain>05ZYH33</strain>
    </source>
</reference>
<evidence type="ECO:0000255" key="1">
    <source>
        <dbReference type="HAMAP-Rule" id="MF_01151"/>
    </source>
</evidence>
<evidence type="ECO:0000256" key="2">
    <source>
        <dbReference type="SAM" id="MobiDB-lite"/>
    </source>
</evidence>
<dbReference type="EMBL" id="CP000407">
    <property type="protein sequence ID" value="ABP89267.1"/>
    <property type="molecule type" value="Genomic_DNA"/>
</dbReference>
<dbReference type="SMR" id="A4VT28"/>
<dbReference type="STRING" id="391295.SSU05_0299"/>
<dbReference type="KEGG" id="ssu:SSU05_0299"/>
<dbReference type="eggNOG" id="COG0576">
    <property type="taxonomic scope" value="Bacteria"/>
</dbReference>
<dbReference type="HOGENOM" id="CLU_057217_6_3_9"/>
<dbReference type="GO" id="GO:0005737">
    <property type="term" value="C:cytoplasm"/>
    <property type="evidence" value="ECO:0007669"/>
    <property type="project" value="UniProtKB-SubCell"/>
</dbReference>
<dbReference type="GO" id="GO:0000774">
    <property type="term" value="F:adenyl-nucleotide exchange factor activity"/>
    <property type="evidence" value="ECO:0007669"/>
    <property type="project" value="InterPro"/>
</dbReference>
<dbReference type="GO" id="GO:0042803">
    <property type="term" value="F:protein homodimerization activity"/>
    <property type="evidence" value="ECO:0007669"/>
    <property type="project" value="InterPro"/>
</dbReference>
<dbReference type="GO" id="GO:0051087">
    <property type="term" value="F:protein-folding chaperone binding"/>
    <property type="evidence" value="ECO:0007669"/>
    <property type="project" value="InterPro"/>
</dbReference>
<dbReference type="GO" id="GO:0051082">
    <property type="term" value="F:unfolded protein binding"/>
    <property type="evidence" value="ECO:0007669"/>
    <property type="project" value="TreeGrafter"/>
</dbReference>
<dbReference type="GO" id="GO:0006457">
    <property type="term" value="P:protein folding"/>
    <property type="evidence" value="ECO:0007669"/>
    <property type="project" value="InterPro"/>
</dbReference>
<dbReference type="CDD" id="cd00446">
    <property type="entry name" value="GrpE"/>
    <property type="match status" value="1"/>
</dbReference>
<dbReference type="FunFam" id="2.30.22.10:FF:000001">
    <property type="entry name" value="Protein GrpE"/>
    <property type="match status" value="1"/>
</dbReference>
<dbReference type="Gene3D" id="3.90.20.20">
    <property type="match status" value="1"/>
</dbReference>
<dbReference type="Gene3D" id="2.30.22.10">
    <property type="entry name" value="Head domain of nucleotide exchange factor GrpE"/>
    <property type="match status" value="1"/>
</dbReference>
<dbReference type="HAMAP" id="MF_01151">
    <property type="entry name" value="GrpE"/>
    <property type="match status" value="1"/>
</dbReference>
<dbReference type="InterPro" id="IPR000740">
    <property type="entry name" value="GrpE"/>
</dbReference>
<dbReference type="InterPro" id="IPR013805">
    <property type="entry name" value="GrpE_coiled_coil"/>
</dbReference>
<dbReference type="InterPro" id="IPR009012">
    <property type="entry name" value="GrpE_head"/>
</dbReference>
<dbReference type="NCBIfam" id="NF010738">
    <property type="entry name" value="PRK14140.1"/>
    <property type="match status" value="1"/>
</dbReference>
<dbReference type="NCBIfam" id="NF010753">
    <property type="entry name" value="PRK14156.1"/>
    <property type="match status" value="1"/>
</dbReference>
<dbReference type="PANTHER" id="PTHR21237">
    <property type="entry name" value="GRPE PROTEIN"/>
    <property type="match status" value="1"/>
</dbReference>
<dbReference type="PANTHER" id="PTHR21237:SF23">
    <property type="entry name" value="GRPE PROTEIN HOMOLOG, MITOCHONDRIAL"/>
    <property type="match status" value="1"/>
</dbReference>
<dbReference type="Pfam" id="PF01025">
    <property type="entry name" value="GrpE"/>
    <property type="match status" value="1"/>
</dbReference>
<dbReference type="PRINTS" id="PR00773">
    <property type="entry name" value="GRPEPROTEIN"/>
</dbReference>
<dbReference type="SUPFAM" id="SSF58014">
    <property type="entry name" value="Coiled-coil domain of nucleotide exchange factor GrpE"/>
    <property type="match status" value="1"/>
</dbReference>
<dbReference type="SUPFAM" id="SSF51064">
    <property type="entry name" value="Head domain of nucleotide exchange factor GrpE"/>
    <property type="match status" value="1"/>
</dbReference>
<dbReference type="PROSITE" id="PS01071">
    <property type="entry name" value="GRPE"/>
    <property type="match status" value="1"/>
</dbReference>
<comment type="function">
    <text evidence="1">Participates actively in the response to hyperosmotic and heat shock by preventing the aggregation of stress-denatured proteins, in association with DnaK and GrpE. It is the nucleotide exchange factor for DnaK and may function as a thermosensor. Unfolded proteins bind initially to DnaJ; upon interaction with the DnaJ-bound protein, DnaK hydrolyzes its bound ATP, resulting in the formation of a stable complex. GrpE releases ADP from DnaK; ATP binding to DnaK triggers the release of the substrate protein, thus completing the reaction cycle. Several rounds of ATP-dependent interactions between DnaJ, DnaK and GrpE are required for fully efficient folding.</text>
</comment>
<comment type="subunit">
    <text evidence="1">Homodimer.</text>
</comment>
<comment type="subcellular location">
    <subcellularLocation>
        <location evidence="1">Cytoplasm</location>
    </subcellularLocation>
</comment>
<comment type="similarity">
    <text evidence="1">Belongs to the GrpE family.</text>
</comment>
<keyword id="KW-0143">Chaperone</keyword>
<keyword id="KW-0963">Cytoplasm</keyword>
<keyword id="KW-0346">Stress response</keyword>
<accession>A4VT28</accession>
<organism>
    <name type="scientific">Streptococcus suis (strain 05ZYH33)</name>
    <dbReference type="NCBI Taxonomy" id="391295"/>
    <lineage>
        <taxon>Bacteria</taxon>
        <taxon>Bacillati</taxon>
        <taxon>Bacillota</taxon>
        <taxon>Bacilli</taxon>
        <taxon>Lactobacillales</taxon>
        <taxon>Streptococcaceae</taxon>
        <taxon>Streptococcus</taxon>
    </lineage>
</organism>